<accession>F5ZP95</accession>
<organism>
    <name type="scientific">Salmonella typhimurium (strain ATCC 68169 / UK-1)</name>
    <dbReference type="NCBI Taxonomy" id="990282"/>
    <lineage>
        <taxon>Bacteria</taxon>
        <taxon>Pseudomonadati</taxon>
        <taxon>Pseudomonadota</taxon>
        <taxon>Gammaproteobacteria</taxon>
        <taxon>Enterobacterales</taxon>
        <taxon>Enterobacteriaceae</taxon>
        <taxon>Salmonella</taxon>
    </lineage>
</organism>
<reference key="1">
    <citation type="journal article" date="2011" name="J. Bacteriol.">
        <title>Complete genome sequence of the universal killer Salmonella enterica serovar typhimurium UK-1 (ATCC 68169).</title>
        <authorList>
            <person name="Luo Y."/>
            <person name="Kong Q."/>
            <person name="Yang J."/>
            <person name="Golden G."/>
            <person name="Wanda S.Y."/>
            <person name="Jensen R.V."/>
            <person name="Ernst P.B."/>
            <person name="Curtiss R. III"/>
        </authorList>
    </citation>
    <scope>NUCLEOTIDE SEQUENCE [LARGE SCALE GENOMIC DNA]</scope>
    <source>
        <strain>ATCC 68169 / UK-1</strain>
    </source>
</reference>
<reference key="2">
    <citation type="journal article" date="1998" name="J. Bacteriol.">
        <title>A low pH-inducible, PhoPQ-dependent acid tolerance response protects Salmonella typhimurium against inorganic acid stress.</title>
        <authorList>
            <person name="Bearson B.L."/>
            <person name="Wilson L."/>
            <person name="Foster J.W."/>
        </authorList>
    </citation>
    <scope>PROTEIN SEQUENCE OF 1-20</scope>
    <scope>FUNCTION</scope>
    <scope>INDUCTION</scope>
    <scope>DISRUPTION PHENOTYPE</scope>
    <source>
        <strain>ATCC 68169 / UK-1</strain>
    </source>
</reference>
<sequence length="224" mass="25633">MMRVLVVEDNALLRHHLKVQLQDSGHQVDAAEDAREADYYLNEHLPDIAIVDLGLPDEDGLSLIRRWRSSDVSLPVLVLTAREGWQDKVEVLSSGADDYVTKPFHIEEVMARMQALMRRNSGLASQVINIPPFQVDLSRRELSVNEEVIKLTAFEYTIMETLIRNNGKVVSKDSLMLQLYPDAELRESHTIDVLMGRLRKKIQAQYPHDVITTVRGQGYLFELR</sequence>
<evidence type="ECO:0000250" key="1"/>
<evidence type="ECO:0000255" key="2">
    <source>
        <dbReference type="PROSITE-ProRule" id="PRU00169"/>
    </source>
</evidence>
<evidence type="ECO:0000255" key="3">
    <source>
        <dbReference type="PROSITE-ProRule" id="PRU01091"/>
    </source>
</evidence>
<evidence type="ECO:0000269" key="4">
    <source>
    </source>
</evidence>
<evidence type="ECO:0000305" key="5"/>
<feature type="chain" id="PRO_0000424529" description="Virulence transcriptional regulatory protein PhoP">
    <location>
        <begin position="1"/>
        <end position="224"/>
    </location>
</feature>
<feature type="domain" description="Response regulatory" evidence="2">
    <location>
        <begin position="3"/>
        <end position="117"/>
    </location>
</feature>
<feature type="DNA-binding region" description="OmpR/PhoB-type" evidence="3">
    <location>
        <begin position="125"/>
        <end position="223"/>
    </location>
</feature>
<feature type="modified residue" description="4-aspartylphosphate" evidence="2">
    <location>
        <position position="52"/>
    </location>
</feature>
<dbReference type="EMBL" id="CP002614">
    <property type="protein sequence ID" value="AEF07105.1"/>
    <property type="molecule type" value="Genomic_DNA"/>
</dbReference>
<dbReference type="SMR" id="F5ZP95"/>
<dbReference type="KEGG" id="sej:STMUK_1199"/>
<dbReference type="PATRIC" id="fig|990282.4.peg.1250"/>
<dbReference type="HOGENOM" id="CLU_000445_30_1_6"/>
<dbReference type="PHI-base" id="PHI:10414"/>
<dbReference type="Proteomes" id="UP000008278">
    <property type="component" value="Chromosome"/>
</dbReference>
<dbReference type="GO" id="GO:0005829">
    <property type="term" value="C:cytosol"/>
    <property type="evidence" value="ECO:0007669"/>
    <property type="project" value="TreeGrafter"/>
</dbReference>
<dbReference type="GO" id="GO:0032993">
    <property type="term" value="C:protein-DNA complex"/>
    <property type="evidence" value="ECO:0007669"/>
    <property type="project" value="TreeGrafter"/>
</dbReference>
<dbReference type="GO" id="GO:0000156">
    <property type="term" value="F:phosphorelay response regulator activity"/>
    <property type="evidence" value="ECO:0007669"/>
    <property type="project" value="TreeGrafter"/>
</dbReference>
<dbReference type="GO" id="GO:0000976">
    <property type="term" value="F:transcription cis-regulatory region binding"/>
    <property type="evidence" value="ECO:0007669"/>
    <property type="project" value="TreeGrafter"/>
</dbReference>
<dbReference type="GO" id="GO:0006355">
    <property type="term" value="P:regulation of DNA-templated transcription"/>
    <property type="evidence" value="ECO:0007669"/>
    <property type="project" value="InterPro"/>
</dbReference>
<dbReference type="CDD" id="cd19934">
    <property type="entry name" value="REC_OmpR_EcPhoP-like"/>
    <property type="match status" value="1"/>
</dbReference>
<dbReference type="CDD" id="cd00383">
    <property type="entry name" value="trans_reg_C"/>
    <property type="match status" value="1"/>
</dbReference>
<dbReference type="FunFam" id="3.40.50.2300:FF:000002">
    <property type="entry name" value="DNA-binding response regulator PhoP"/>
    <property type="match status" value="1"/>
</dbReference>
<dbReference type="FunFam" id="1.10.10.10:FF:000098">
    <property type="entry name" value="Two-component system response regulator PhoP"/>
    <property type="match status" value="1"/>
</dbReference>
<dbReference type="Gene3D" id="3.40.50.2300">
    <property type="match status" value="1"/>
</dbReference>
<dbReference type="Gene3D" id="6.10.250.690">
    <property type="match status" value="1"/>
</dbReference>
<dbReference type="Gene3D" id="1.10.10.10">
    <property type="entry name" value="Winged helix-like DNA-binding domain superfamily/Winged helix DNA-binding domain"/>
    <property type="match status" value="1"/>
</dbReference>
<dbReference type="InterPro" id="IPR011006">
    <property type="entry name" value="CheY-like_superfamily"/>
</dbReference>
<dbReference type="InterPro" id="IPR001867">
    <property type="entry name" value="OmpR/PhoB-type_DNA-bd"/>
</dbReference>
<dbReference type="InterPro" id="IPR001789">
    <property type="entry name" value="Sig_transdc_resp-reg_receiver"/>
</dbReference>
<dbReference type="InterPro" id="IPR039420">
    <property type="entry name" value="WalR-like"/>
</dbReference>
<dbReference type="InterPro" id="IPR036388">
    <property type="entry name" value="WH-like_DNA-bd_sf"/>
</dbReference>
<dbReference type="NCBIfam" id="NF008078">
    <property type="entry name" value="PRK10816.1"/>
    <property type="match status" value="1"/>
</dbReference>
<dbReference type="PANTHER" id="PTHR48111">
    <property type="entry name" value="REGULATOR OF RPOS"/>
    <property type="match status" value="1"/>
</dbReference>
<dbReference type="PANTHER" id="PTHR48111:SF71">
    <property type="entry name" value="TRANSCRIPTIONAL REGULATORY PROTEIN PHOP"/>
    <property type="match status" value="1"/>
</dbReference>
<dbReference type="Pfam" id="PF00072">
    <property type="entry name" value="Response_reg"/>
    <property type="match status" value="1"/>
</dbReference>
<dbReference type="Pfam" id="PF00486">
    <property type="entry name" value="Trans_reg_C"/>
    <property type="match status" value="1"/>
</dbReference>
<dbReference type="SMART" id="SM00448">
    <property type="entry name" value="REC"/>
    <property type="match status" value="1"/>
</dbReference>
<dbReference type="SMART" id="SM00862">
    <property type="entry name" value="Trans_reg_C"/>
    <property type="match status" value="1"/>
</dbReference>
<dbReference type="SUPFAM" id="SSF52172">
    <property type="entry name" value="CheY-like"/>
    <property type="match status" value="1"/>
</dbReference>
<dbReference type="PROSITE" id="PS51755">
    <property type="entry name" value="OMPR_PHOB"/>
    <property type="match status" value="1"/>
</dbReference>
<dbReference type="PROSITE" id="PS50110">
    <property type="entry name" value="RESPONSE_REGULATORY"/>
    <property type="match status" value="1"/>
</dbReference>
<comment type="function">
    <text evidence="4 5">Member of the two-component regulatory system PhoP/PhoQ which regulates the expression of genes involved in virulence, adaptation to acidic and low Mg(2+) environments and resistance to host defense antimicrobial peptides. Essential for intramacrophage survival of S.typhimurium. In low periplasmic Mg(2+), PhoQ phosphorylates PhoP, resulting in the expression of PhoP-activated genes (PAG) and repression of PhoP-repressed genes (PRG). In high periplasmic Mg(2+), PhoQ dephosphorylates phospho-PhoP, resulting in the repression of PAG and may lead to expression of some PRG. Essential for transcription of spiC inside macrophages by controlling the expression of the two-component regulatory system SsrB/SpiR (SsrA) and Pir at transcriptional and post-transcriptional levels respectively. Promotes expression of the two-component regulatory system PmrA/PmrB via activation of pmrD gene. Is required to attenuate bacterial growth within fibroblast cells and to enhance bacterial resistance to bile in intestinal cells. Negatively regulates prgH, which is required for invasion of epithelial cells. PhoP uses multiple mechanisms to promote transcription and activates promoters for PAG at low (uM range) Mg(2+) concentrations (Probable). Involved in acid tolerance.</text>
</comment>
<comment type="subunit">
    <text evidence="1">Monomer in the inactive, unphosphorylated state and dimer in the active, phosphorylated state.</text>
</comment>
<comment type="subcellular location">
    <subcellularLocation>
        <location evidence="5">Cytoplasm</location>
    </subcellularLocation>
</comment>
<comment type="induction">
    <text evidence="4">The phoP/phoQ operon is positively autoregulated by both PhoP and PhoQ in a Mg(2+)-dependent manner. Induced at pH 4.4 (at protein level).</text>
</comment>
<comment type="PTM">
    <text evidence="5">Phosphorylated by PhoQ.</text>
</comment>
<comment type="disruption phenotype">
    <text evidence="4">Decreased tolerance to acid stress.</text>
</comment>
<comment type="miscellaneous">
    <text evidence="5">PhoP/PhoQ-signaling cascade, which activates virulence membrane proteins (PagC, PagO, PagD, PagK, PgtE and PhoN), is induced by cationic antimicrobial peptides (CAMP) (polymyxin, alpha-helical peptide C18G and sheet peptide protegrin-1) at sublethal concentrations.</text>
</comment>
<proteinExistence type="evidence at protein level"/>
<gene>
    <name type="primary">phoP</name>
    <name type="ordered locus">STMUK_1199</name>
</gene>
<name>PHOP_SALTU</name>
<protein>
    <recommendedName>
        <fullName>Virulence transcriptional regulatory protein PhoP</fullName>
    </recommendedName>
</protein>
<keyword id="KW-0010">Activator</keyword>
<keyword id="KW-0963">Cytoplasm</keyword>
<keyword id="KW-0903">Direct protein sequencing</keyword>
<keyword id="KW-0238">DNA-binding</keyword>
<keyword id="KW-0341">Growth regulation</keyword>
<keyword id="KW-0597">Phosphoprotein</keyword>
<keyword id="KW-0678">Repressor</keyword>
<keyword id="KW-0804">Transcription</keyword>
<keyword id="KW-0805">Transcription regulation</keyword>
<keyword id="KW-0902">Two-component regulatory system</keyword>
<keyword id="KW-0843">Virulence</keyword>